<dbReference type="EC" id="6.3.2.2" evidence="1"/>
<dbReference type="EMBL" id="CT573326">
    <property type="protein sequence ID" value="CAK15852.1"/>
    <property type="molecule type" value="Genomic_DNA"/>
</dbReference>
<dbReference type="RefSeq" id="WP_011534240.1">
    <property type="nucleotide sequence ID" value="NC_008027.1"/>
</dbReference>
<dbReference type="SMR" id="Q1I926"/>
<dbReference type="STRING" id="384676.PSEEN3084"/>
<dbReference type="GeneID" id="32806193"/>
<dbReference type="KEGG" id="pen:PSEEN3084"/>
<dbReference type="eggNOG" id="COG2170">
    <property type="taxonomic scope" value="Bacteria"/>
</dbReference>
<dbReference type="HOGENOM" id="CLU_044848_0_1_6"/>
<dbReference type="OrthoDB" id="9769628at2"/>
<dbReference type="Proteomes" id="UP000000658">
    <property type="component" value="Chromosome"/>
</dbReference>
<dbReference type="GO" id="GO:0005524">
    <property type="term" value="F:ATP binding"/>
    <property type="evidence" value="ECO:0007669"/>
    <property type="project" value="UniProtKB-KW"/>
</dbReference>
<dbReference type="GO" id="GO:0004357">
    <property type="term" value="F:glutamate-cysteine ligase activity"/>
    <property type="evidence" value="ECO:0007669"/>
    <property type="project" value="UniProtKB-EC"/>
</dbReference>
<dbReference type="GO" id="GO:0042398">
    <property type="term" value="P:modified amino acid biosynthetic process"/>
    <property type="evidence" value="ECO:0007669"/>
    <property type="project" value="InterPro"/>
</dbReference>
<dbReference type="Gene3D" id="3.30.590.20">
    <property type="match status" value="1"/>
</dbReference>
<dbReference type="HAMAP" id="MF_01609">
    <property type="entry name" value="Glu_cys_ligase_2"/>
    <property type="match status" value="1"/>
</dbReference>
<dbReference type="InterPro" id="IPR050141">
    <property type="entry name" value="GCL_type2/YbdK_subfam"/>
</dbReference>
<dbReference type="InterPro" id="IPR006336">
    <property type="entry name" value="GCS2"/>
</dbReference>
<dbReference type="InterPro" id="IPR014746">
    <property type="entry name" value="Gln_synth/guanido_kin_cat_dom"/>
</dbReference>
<dbReference type="InterPro" id="IPR011793">
    <property type="entry name" value="YbdK"/>
</dbReference>
<dbReference type="NCBIfam" id="TIGR02050">
    <property type="entry name" value="gshA_cyan_rel"/>
    <property type="match status" value="1"/>
</dbReference>
<dbReference type="NCBIfam" id="NF010039">
    <property type="entry name" value="PRK13515.1"/>
    <property type="match status" value="1"/>
</dbReference>
<dbReference type="PANTHER" id="PTHR36510">
    <property type="entry name" value="GLUTAMATE--CYSTEINE LIGASE 2-RELATED"/>
    <property type="match status" value="1"/>
</dbReference>
<dbReference type="PANTHER" id="PTHR36510:SF1">
    <property type="entry name" value="GLUTAMATE--CYSTEINE LIGASE 2-RELATED"/>
    <property type="match status" value="1"/>
</dbReference>
<dbReference type="Pfam" id="PF04107">
    <property type="entry name" value="GCS2"/>
    <property type="match status" value="1"/>
</dbReference>
<dbReference type="SUPFAM" id="SSF55931">
    <property type="entry name" value="Glutamine synthetase/guanido kinase"/>
    <property type="match status" value="1"/>
</dbReference>
<gene>
    <name type="ordered locus">PSEEN3084</name>
</gene>
<protein>
    <recommendedName>
        <fullName evidence="1">Putative glutamate--cysteine ligase 2</fullName>
        <ecNumber evidence="1">6.3.2.2</ecNumber>
    </recommendedName>
    <alternativeName>
        <fullName evidence="1">Gamma-glutamylcysteine synthetase 2</fullName>
        <shortName evidence="1">GCS 2</shortName>
        <shortName evidence="1">Gamma-GCS 2</shortName>
    </alternativeName>
</protein>
<name>GCS2_PSEE4</name>
<feature type="chain" id="PRO_0000291509" description="Putative glutamate--cysteine ligase 2">
    <location>
        <begin position="1"/>
        <end position="380"/>
    </location>
</feature>
<organism>
    <name type="scientific">Pseudomonas entomophila (strain L48)</name>
    <dbReference type="NCBI Taxonomy" id="384676"/>
    <lineage>
        <taxon>Bacteria</taxon>
        <taxon>Pseudomonadati</taxon>
        <taxon>Pseudomonadota</taxon>
        <taxon>Gammaproteobacteria</taxon>
        <taxon>Pseudomonadales</taxon>
        <taxon>Pseudomonadaceae</taxon>
        <taxon>Pseudomonas</taxon>
    </lineage>
</organism>
<sequence>MARPWTFGIEEEYLLADTTSGQVLASPSPAVTRRCREMLGATFAEEMFLSQIEVVSPVFDSLHQARSFLGENRQRLGEALGDFGVGLYGAASHPCAQWLRQHPRGTAHFRQLFDDYRLVARRSLVNGLHVHVGVPAGTDRMQLINRVLYWLPLFLVLSTSSPLWGGQDTGYMSYRRVICGEWPHMGLPEPLADWHAYQRYRGLLQRTGALAEDGDFWWAIRPSRRFPTVELRICDGCPRLEDGLAIAGLYRHLVQHALARHDGMAVSREIRWITQENYWRAARYGRRGTFIGAVDQQPVSAEGWLAQLQSWLPADSAEAERSFMQARRILREGTSADRQREAYALARENGLAGREALRAVARQVMAEHFPGAGLPQGEIE</sequence>
<comment type="function">
    <text evidence="1">ATP-dependent carboxylate-amine ligase which exhibits weak glutamate--cysteine ligase activity.</text>
</comment>
<comment type="catalytic activity">
    <reaction evidence="1">
        <text>L-cysteine + L-glutamate + ATP = gamma-L-glutamyl-L-cysteine + ADP + phosphate + H(+)</text>
        <dbReference type="Rhea" id="RHEA:13285"/>
        <dbReference type="ChEBI" id="CHEBI:15378"/>
        <dbReference type="ChEBI" id="CHEBI:29985"/>
        <dbReference type="ChEBI" id="CHEBI:30616"/>
        <dbReference type="ChEBI" id="CHEBI:35235"/>
        <dbReference type="ChEBI" id="CHEBI:43474"/>
        <dbReference type="ChEBI" id="CHEBI:58173"/>
        <dbReference type="ChEBI" id="CHEBI:456216"/>
        <dbReference type="EC" id="6.3.2.2"/>
    </reaction>
</comment>
<comment type="similarity">
    <text evidence="1">Belongs to the glutamate--cysteine ligase type 2 family. YbdK subfamily.</text>
</comment>
<accession>Q1I926</accession>
<keyword id="KW-0067">ATP-binding</keyword>
<keyword id="KW-0436">Ligase</keyword>
<keyword id="KW-0547">Nucleotide-binding</keyword>
<evidence type="ECO:0000255" key="1">
    <source>
        <dbReference type="HAMAP-Rule" id="MF_01609"/>
    </source>
</evidence>
<reference key="1">
    <citation type="journal article" date="2006" name="Nat. Biotechnol.">
        <title>Complete genome sequence of the entomopathogenic and metabolically versatile soil bacterium Pseudomonas entomophila.</title>
        <authorList>
            <person name="Vodovar N."/>
            <person name="Vallenet D."/>
            <person name="Cruveiller S."/>
            <person name="Rouy Z."/>
            <person name="Barbe V."/>
            <person name="Acosta C."/>
            <person name="Cattolico L."/>
            <person name="Jubin C."/>
            <person name="Lajus A."/>
            <person name="Segurens B."/>
            <person name="Vacherie B."/>
            <person name="Wincker P."/>
            <person name="Weissenbach J."/>
            <person name="Lemaitre B."/>
            <person name="Medigue C."/>
            <person name="Boccard F."/>
        </authorList>
    </citation>
    <scope>NUCLEOTIDE SEQUENCE [LARGE SCALE GENOMIC DNA]</scope>
    <source>
        <strain>L48</strain>
    </source>
</reference>
<proteinExistence type="inferred from homology"/>